<comment type="function">
    <text evidence="2 3">Sliding clamp subunit that acts as a moving platform for DNA processing. Responsible for tethering the catalytic subunit of DNA polymerase and other proteins to DNA during high-speed replication (By similarity). Both trimeric complexes inhibit DNA ligase and both 3'-5' and 5'-3' activity of Hel308 (Hjm) helicase, but stimulate Hjc, the Holliday junction cleavage enzyme.</text>
</comment>
<comment type="subunit">
    <text evidence="1 3 4">The subunits circularize to form a toroid; DNA passes through its center. Replication factor C (RFC) is required to load the toroid on the DNA (By similarity). Forms dimeric complexes with PCNA1 and PCNA2, and trimeric complexes with PCNA123 and PCNA323; does not form homotrimers (PubMed:18782564). Crystal structures show a heterotetramer of 2 PCNA2 and 2 PCNA3, which would be large enough to clamp a Holliday junction (PubMed:21352919).</text>
</comment>
<comment type="similarity">
    <text evidence="2">Belongs to the PCNA family.</text>
</comment>
<reference key="1">
    <citation type="journal article" date="2001" name="DNA Res.">
        <title>Complete genome sequence of an aerobic thermoacidophilic Crenarchaeon, Sulfolobus tokodaii strain7.</title>
        <authorList>
            <person name="Kawarabayasi Y."/>
            <person name="Hino Y."/>
            <person name="Horikawa H."/>
            <person name="Jin-no K."/>
            <person name="Takahashi M."/>
            <person name="Sekine M."/>
            <person name="Baba S."/>
            <person name="Ankai A."/>
            <person name="Kosugi H."/>
            <person name="Hosoyama A."/>
            <person name="Fukui S."/>
            <person name="Nagai Y."/>
            <person name="Nishijima K."/>
            <person name="Otsuka R."/>
            <person name="Nakazawa H."/>
            <person name="Takamiya M."/>
            <person name="Kato Y."/>
            <person name="Yoshizawa T."/>
            <person name="Tanaka T."/>
            <person name="Kudoh Y."/>
            <person name="Yamazaki J."/>
            <person name="Kushida N."/>
            <person name="Oguchi A."/>
            <person name="Aoki K."/>
            <person name="Masuda S."/>
            <person name="Yanagii M."/>
            <person name="Nishimura M."/>
            <person name="Yamagishi A."/>
            <person name="Oshima T."/>
            <person name="Kikuchi H."/>
        </authorList>
    </citation>
    <scope>NUCLEOTIDE SEQUENCE [LARGE SCALE GENOMIC DNA]</scope>
    <source>
        <strain>DSM 16993 / JCM 10545 / NBRC 100140 / 7</strain>
    </source>
</reference>
<reference key="2">
    <citation type="journal article" date="2008" name="Biochem. Biophys. Res. Commun.">
        <title>Spatial subunit distribution and in vitro functions of the novel trimeric PCNA complex from Sulfolobus tokodaii.</title>
        <authorList>
            <person name="Lu S."/>
            <person name="Li Z."/>
            <person name="Wang Z."/>
            <person name="Ma X."/>
            <person name="Sheng D."/>
            <person name="Ni J."/>
            <person name="Shen Y."/>
        </authorList>
    </citation>
    <scope>FUNCTION</scope>
    <scope>INTERACTION WITH PCNA1 AND PCNA2</scope>
    <scope>SUBUNIT</scope>
    <source>
        <strain>DSM 16993 / JCM 10545 / NBRC 100140 / 7</strain>
    </source>
</reference>
<reference key="3">
    <citation type="journal article" date="2011" name="J. Struct. Biol.">
        <title>A novel heterotetrameric structure of the crenarchaeal PCNA2-PCNA3 complex.</title>
        <authorList>
            <person name="Kawai A."/>
            <person name="Hashimoto H."/>
            <person name="Higuchi S."/>
            <person name="Tsunoda M."/>
            <person name="Sato M."/>
            <person name="Nakamura K.T."/>
            <person name="Miyamoto S."/>
        </authorList>
    </citation>
    <scope>X-RAY CRYSTALLOGRAPHY (2.8 ANGSTROMS)</scope>
    <scope>SUBUNIT</scope>
</reference>
<feature type="chain" id="PRO_0000149219" description="DNA polymerase sliding clamp 3">
    <location>
        <begin position="1"/>
        <end position="246"/>
    </location>
</feature>
<feature type="strand" evidence="5">
    <location>
        <begin position="2"/>
        <end position="6"/>
    </location>
</feature>
<feature type="helix" evidence="5">
    <location>
        <begin position="8"/>
        <end position="18"/>
    </location>
</feature>
<feature type="turn" evidence="5">
    <location>
        <begin position="19"/>
        <end position="21"/>
    </location>
</feature>
<feature type="strand" evidence="5">
    <location>
        <begin position="23"/>
        <end position="29"/>
    </location>
</feature>
<feature type="strand" evidence="5">
    <location>
        <begin position="31"/>
        <end position="39"/>
    </location>
</feature>
<feature type="strand" evidence="5">
    <location>
        <begin position="45"/>
        <end position="52"/>
    </location>
</feature>
<feature type="helix" evidence="5">
    <location>
        <begin position="53"/>
        <end position="55"/>
    </location>
</feature>
<feature type="strand" evidence="5">
    <location>
        <begin position="56"/>
        <end position="60"/>
    </location>
</feature>
<feature type="strand" evidence="5">
    <location>
        <begin position="65"/>
        <end position="70"/>
    </location>
</feature>
<feature type="helix" evidence="5">
    <location>
        <begin position="71"/>
        <end position="78"/>
    </location>
</feature>
<feature type="strand" evidence="5">
    <location>
        <begin position="86"/>
        <end position="91"/>
    </location>
</feature>
<feature type="strand" evidence="5">
    <location>
        <begin position="93"/>
        <end position="95"/>
    </location>
</feature>
<feature type="strand" evidence="5">
    <location>
        <begin position="97"/>
        <end position="111"/>
    </location>
</feature>
<feature type="strand" evidence="5">
    <location>
        <begin position="129"/>
        <end position="135"/>
    </location>
</feature>
<feature type="helix" evidence="5">
    <location>
        <begin position="136"/>
        <end position="149"/>
    </location>
</feature>
<feature type="strand" evidence="5">
    <location>
        <begin position="152"/>
        <end position="159"/>
    </location>
</feature>
<feature type="strand" evidence="5">
    <location>
        <begin position="162"/>
        <end position="168"/>
    </location>
</feature>
<feature type="strand" evidence="5">
    <location>
        <begin position="173"/>
        <end position="178"/>
    </location>
</feature>
<feature type="turn" evidence="5">
    <location>
        <begin position="180"/>
        <end position="183"/>
    </location>
</feature>
<feature type="strand" evidence="5">
    <location>
        <begin position="186"/>
        <end position="190"/>
    </location>
</feature>
<feature type="strand" evidence="5">
    <location>
        <begin position="193"/>
        <end position="198"/>
    </location>
</feature>
<feature type="helix" evidence="5">
    <location>
        <begin position="199"/>
        <end position="203"/>
    </location>
</feature>
<feature type="helix" evidence="5">
    <location>
        <begin position="204"/>
        <end position="208"/>
    </location>
</feature>
<feature type="turn" evidence="5">
    <location>
        <begin position="209"/>
        <end position="211"/>
    </location>
</feature>
<feature type="strand" evidence="5">
    <location>
        <begin position="213"/>
        <end position="220"/>
    </location>
</feature>
<feature type="strand" evidence="5">
    <location>
        <begin position="223"/>
        <end position="231"/>
    </location>
</feature>
<feature type="turn" evidence="5">
    <location>
        <begin position="232"/>
        <end position="234"/>
    </location>
</feature>
<feature type="strand" evidence="5">
    <location>
        <begin position="235"/>
        <end position="241"/>
    </location>
</feature>
<evidence type="ECO:0000250" key="1"/>
<evidence type="ECO:0000255" key="2">
    <source>
        <dbReference type="HAMAP-Rule" id="MF_00317"/>
    </source>
</evidence>
<evidence type="ECO:0000269" key="3">
    <source>
    </source>
</evidence>
<evidence type="ECO:0000269" key="4">
    <source>
    </source>
</evidence>
<evidence type="ECO:0007829" key="5">
    <source>
        <dbReference type="PDB" id="3AIZ"/>
    </source>
</evidence>
<proteinExistence type="evidence at protein level"/>
<dbReference type="EMBL" id="BA000023">
    <property type="protein sequence ID" value="BAK54417.1"/>
    <property type="molecule type" value="Genomic_DNA"/>
</dbReference>
<dbReference type="RefSeq" id="WP_010978940.1">
    <property type="nucleotide sequence ID" value="NC_003106.2"/>
</dbReference>
<dbReference type="PDB" id="3AIX">
    <property type="method" value="X-ray"/>
    <property type="resolution" value="2.90 A"/>
    <property type="chains" value="A=1-246"/>
</dbReference>
<dbReference type="PDB" id="3AIZ">
    <property type="method" value="X-ray"/>
    <property type="resolution" value="2.80 A"/>
    <property type="chains" value="C/D=1-246"/>
</dbReference>
<dbReference type="PDBsum" id="3AIX"/>
<dbReference type="PDBsum" id="3AIZ"/>
<dbReference type="SMR" id="Q973F5"/>
<dbReference type="STRING" id="273063.STK_09440"/>
<dbReference type="GeneID" id="1458909"/>
<dbReference type="KEGG" id="sto:STK_09440"/>
<dbReference type="PATRIC" id="fig|273063.9.peg.1056"/>
<dbReference type="eggNOG" id="arCOG00488">
    <property type="taxonomic scope" value="Archaea"/>
</dbReference>
<dbReference type="OrthoDB" id="14749at2157"/>
<dbReference type="EvolutionaryTrace" id="Q973F5"/>
<dbReference type="Proteomes" id="UP000001015">
    <property type="component" value="Chromosome"/>
</dbReference>
<dbReference type="GO" id="GO:0003677">
    <property type="term" value="F:DNA binding"/>
    <property type="evidence" value="ECO:0007669"/>
    <property type="project" value="UniProtKB-UniRule"/>
</dbReference>
<dbReference type="GO" id="GO:0030337">
    <property type="term" value="F:DNA polymerase processivity factor activity"/>
    <property type="evidence" value="ECO:0007669"/>
    <property type="project" value="UniProtKB-UniRule"/>
</dbReference>
<dbReference type="GO" id="GO:0006272">
    <property type="term" value="P:leading strand elongation"/>
    <property type="evidence" value="ECO:0007669"/>
    <property type="project" value="TreeGrafter"/>
</dbReference>
<dbReference type="GO" id="GO:0006275">
    <property type="term" value="P:regulation of DNA replication"/>
    <property type="evidence" value="ECO:0007669"/>
    <property type="project" value="UniProtKB-UniRule"/>
</dbReference>
<dbReference type="CDD" id="cd00577">
    <property type="entry name" value="PCNA"/>
    <property type="match status" value="1"/>
</dbReference>
<dbReference type="Gene3D" id="3.70.10.10">
    <property type="match status" value="1"/>
</dbReference>
<dbReference type="HAMAP" id="MF_00317">
    <property type="entry name" value="DNApol_clamp_arch"/>
    <property type="match status" value="1"/>
</dbReference>
<dbReference type="InterPro" id="IPR046938">
    <property type="entry name" value="DNA_clamp_sf"/>
</dbReference>
<dbReference type="InterPro" id="IPR000730">
    <property type="entry name" value="Pr_cel_nuc_antig"/>
</dbReference>
<dbReference type="InterPro" id="IPR022649">
    <property type="entry name" value="Pr_cel_nuc_antig_C"/>
</dbReference>
<dbReference type="InterPro" id="IPR022659">
    <property type="entry name" value="Pr_cel_nuc_antig_CS"/>
</dbReference>
<dbReference type="InterPro" id="IPR022648">
    <property type="entry name" value="Pr_cel_nuc_antig_N"/>
</dbReference>
<dbReference type="NCBIfam" id="NF002220">
    <property type="entry name" value="PRK01115.1-3"/>
    <property type="match status" value="1"/>
</dbReference>
<dbReference type="PANTHER" id="PTHR11352">
    <property type="entry name" value="PROLIFERATING CELL NUCLEAR ANTIGEN"/>
    <property type="match status" value="1"/>
</dbReference>
<dbReference type="PANTHER" id="PTHR11352:SF0">
    <property type="entry name" value="PROLIFERATING CELL NUCLEAR ANTIGEN"/>
    <property type="match status" value="1"/>
</dbReference>
<dbReference type="Pfam" id="PF02747">
    <property type="entry name" value="PCNA_C"/>
    <property type="match status" value="1"/>
</dbReference>
<dbReference type="Pfam" id="PF00705">
    <property type="entry name" value="PCNA_N"/>
    <property type="match status" value="1"/>
</dbReference>
<dbReference type="PRINTS" id="PR00339">
    <property type="entry name" value="PCNACYCLIN"/>
</dbReference>
<dbReference type="SUPFAM" id="SSF55979">
    <property type="entry name" value="DNA clamp"/>
    <property type="match status" value="2"/>
</dbReference>
<dbReference type="PROSITE" id="PS01251">
    <property type="entry name" value="PCNA_1"/>
    <property type="match status" value="1"/>
</dbReference>
<name>PCNA3_SULTO</name>
<gene>
    <name evidence="2" type="primary">pcn3</name>
    <name type="synonym">pcnC</name>
    <name type="ordered locus">STK_09440</name>
</gene>
<keyword id="KW-0002">3D-structure</keyword>
<keyword id="KW-0235">DNA replication</keyword>
<keyword id="KW-0238">DNA-binding</keyword>
<keyword id="KW-1185">Reference proteome</keyword>
<protein>
    <recommendedName>
        <fullName evidence="2">DNA polymerase sliding clamp 3</fullName>
    </recommendedName>
    <alternativeName>
        <fullName evidence="2">Proliferating cell nuclear antigen homolog 3</fullName>
        <shortName evidence="2">PCNA3</shortName>
    </alternativeName>
</protein>
<organism>
    <name type="scientific">Sulfurisphaera tokodaii (strain DSM 16993 / JCM 10545 / NBRC 100140 / 7)</name>
    <name type="common">Sulfolobus tokodaii</name>
    <dbReference type="NCBI Taxonomy" id="273063"/>
    <lineage>
        <taxon>Archaea</taxon>
        <taxon>Thermoproteota</taxon>
        <taxon>Thermoprotei</taxon>
        <taxon>Sulfolobales</taxon>
        <taxon>Sulfolobaceae</taxon>
        <taxon>Sulfurisphaera</taxon>
    </lineage>
</organism>
<sequence length="246" mass="27437">MRVKVIDADAFSYIFRTLEEFIDEITLDFTSDGLKIRGIDPSRVTFIDILIPAGYFEEYNVEKEEKVGVKLEDFTDVLKTVTKNDSLYLETDENQNIKVTLDGVYERTFTFPSIVASEIETPNLNLEFPFKAKALTVTFTDIIDEIEDIGGDSITFKAEGGKLYLSANSDMGSSTIELSTENGGLLESEGGDAESVYGLEYVVNTSKMRKPSDTVEIAFGSQIPLKLRYNLPQGGYADFYIAPRAE</sequence>
<accession>Q973F5</accession>
<accession>F9VNC0</accession>